<keyword id="KW-0238">DNA-binding</keyword>
<keyword id="KW-0479">Metal-binding</keyword>
<keyword id="KW-0539">Nucleus</keyword>
<keyword id="KW-0675">Receptor</keyword>
<keyword id="KW-1185">Reference proteome</keyword>
<keyword id="KW-0804">Transcription</keyword>
<keyword id="KW-0805">Transcription regulation</keyword>
<keyword id="KW-0862">Zinc</keyword>
<keyword id="KW-0863">Zinc-finger</keyword>
<proteinExistence type="evidence at transcript level"/>
<feature type="chain" id="PRO_0000053439" description="Thyroid hormone receptor alpha">
    <location>
        <begin position="1" status="less than"/>
        <end position="129" status="greater than"/>
    </location>
</feature>
<feature type="domain" description="NR LBD" evidence="2">
    <location>
        <begin position="26"/>
        <end position="129" status="greater than"/>
    </location>
</feature>
<feature type="binding site" evidence="1">
    <location>
        <position position="91"/>
    </location>
    <ligand>
        <name>3,3',5-triiodo-L-thyronine</name>
        <dbReference type="ChEBI" id="CHEBI:533015"/>
    </ligand>
</feature>
<feature type="non-terminal residue">
    <location>
        <position position="1"/>
    </location>
</feature>
<feature type="non-terminal residue">
    <location>
        <position position="129"/>
    </location>
</feature>
<sequence>IEENRQRRKREEMVRTLQTRPEPNTAEWELIRMVTEAHRHTNAQGSSWKQKRKFLSDDIGQGPVVPTSEGDKVDLEAFSEFTKIMTPAITRVVDFAKKLPMFSELPCEDQIILLKGCCMEIMSLRAAVR</sequence>
<accession>O57568</accession>
<gene>
    <name type="primary">thra1</name>
    <name type="synonym">nr1a1</name>
</gene>
<name>THA_SPAAU</name>
<reference key="1">
    <citation type="submission" date="1998-02" db="EMBL/GenBank/DDBJ databases">
        <authorList>
            <person name="Llewellyn L."/>
            <person name="Power D.M."/>
            <person name="Ramsurn V.P."/>
            <person name="Sweeney G.E."/>
            <person name="Wigham T."/>
        </authorList>
    </citation>
    <scope>NUCLEOTIDE SEQUENCE [MRNA]</scope>
    <source>
        <tissue>Liver</tissue>
    </source>
</reference>
<dbReference type="EMBL" id="AF047467">
    <property type="protein sequence ID" value="AAC03785.1"/>
    <property type="molecule type" value="mRNA"/>
</dbReference>
<dbReference type="SMR" id="O57568"/>
<dbReference type="InParanoid" id="O57568"/>
<dbReference type="Proteomes" id="UP000472265">
    <property type="component" value="Unplaced"/>
</dbReference>
<dbReference type="GO" id="GO:0090575">
    <property type="term" value="C:RNA polymerase II transcription regulator complex"/>
    <property type="evidence" value="ECO:0007669"/>
    <property type="project" value="TreeGrafter"/>
</dbReference>
<dbReference type="GO" id="GO:0004879">
    <property type="term" value="F:nuclear receptor activity"/>
    <property type="evidence" value="ECO:0000250"/>
    <property type="project" value="UniProtKB"/>
</dbReference>
<dbReference type="GO" id="GO:0000978">
    <property type="term" value="F:RNA polymerase II cis-regulatory region sequence-specific DNA binding"/>
    <property type="evidence" value="ECO:0007669"/>
    <property type="project" value="TreeGrafter"/>
</dbReference>
<dbReference type="GO" id="GO:0070324">
    <property type="term" value="F:thyroid hormone binding"/>
    <property type="evidence" value="ECO:0000250"/>
    <property type="project" value="UniProtKB"/>
</dbReference>
<dbReference type="GO" id="GO:0008270">
    <property type="term" value="F:zinc ion binding"/>
    <property type="evidence" value="ECO:0007669"/>
    <property type="project" value="UniProtKB-KW"/>
</dbReference>
<dbReference type="GO" id="GO:0030154">
    <property type="term" value="P:cell differentiation"/>
    <property type="evidence" value="ECO:0007669"/>
    <property type="project" value="TreeGrafter"/>
</dbReference>
<dbReference type="GO" id="GO:0000122">
    <property type="term" value="P:negative regulation of transcription by RNA polymerase II"/>
    <property type="evidence" value="ECO:0007669"/>
    <property type="project" value="TreeGrafter"/>
</dbReference>
<dbReference type="GO" id="GO:0045944">
    <property type="term" value="P:positive regulation of transcription by RNA polymerase II"/>
    <property type="evidence" value="ECO:0007669"/>
    <property type="project" value="TreeGrafter"/>
</dbReference>
<dbReference type="GO" id="GO:0048384">
    <property type="term" value="P:retinoic acid receptor signaling pathway"/>
    <property type="evidence" value="ECO:0007669"/>
    <property type="project" value="TreeGrafter"/>
</dbReference>
<dbReference type="GO" id="GO:0002154">
    <property type="term" value="P:thyroid hormone receptor signaling pathway"/>
    <property type="evidence" value="ECO:0007669"/>
    <property type="project" value="TreeGrafter"/>
</dbReference>
<dbReference type="Gene3D" id="1.10.565.10">
    <property type="entry name" value="Retinoid X Receptor"/>
    <property type="match status" value="1"/>
</dbReference>
<dbReference type="InterPro" id="IPR035500">
    <property type="entry name" value="NHR-like_dom_sf"/>
</dbReference>
<dbReference type="InterPro" id="IPR000536">
    <property type="entry name" value="Nucl_hrmn_rcpt_lig-bd"/>
</dbReference>
<dbReference type="InterPro" id="IPR050234">
    <property type="entry name" value="Nuclear_hormone_rcpt_NR1"/>
</dbReference>
<dbReference type="InterPro" id="IPR001723">
    <property type="entry name" value="Nuclear_hrmn_rcpt"/>
</dbReference>
<dbReference type="InterPro" id="IPR001728">
    <property type="entry name" value="ThyrH_rcpt"/>
</dbReference>
<dbReference type="PANTHER" id="PTHR24082">
    <property type="entry name" value="NUCLEAR HORMONE RECEPTOR"/>
    <property type="match status" value="1"/>
</dbReference>
<dbReference type="PANTHER" id="PTHR24082:SF42">
    <property type="entry name" value="THYROID HORMONE RECEPTOR ALPHA"/>
    <property type="match status" value="1"/>
</dbReference>
<dbReference type="Pfam" id="PF00104">
    <property type="entry name" value="Hormone_recep"/>
    <property type="match status" value="1"/>
</dbReference>
<dbReference type="PRINTS" id="PR00398">
    <property type="entry name" value="STRDHORMONER"/>
</dbReference>
<dbReference type="PRINTS" id="PR00546">
    <property type="entry name" value="THYROIDHORMR"/>
</dbReference>
<dbReference type="SUPFAM" id="SSF48508">
    <property type="entry name" value="Nuclear receptor ligand-binding domain"/>
    <property type="match status" value="1"/>
</dbReference>
<dbReference type="PROSITE" id="PS51843">
    <property type="entry name" value="NR_LBD"/>
    <property type="match status" value="1"/>
</dbReference>
<evidence type="ECO:0000250" key="1">
    <source>
        <dbReference type="UniProtKB" id="P10827"/>
    </source>
</evidence>
<evidence type="ECO:0000255" key="2">
    <source>
        <dbReference type="PROSITE-ProRule" id="PRU01189"/>
    </source>
</evidence>
<evidence type="ECO:0000305" key="3"/>
<organism>
    <name type="scientific">Sparus aurata</name>
    <name type="common">Gilthead sea bream</name>
    <dbReference type="NCBI Taxonomy" id="8175"/>
    <lineage>
        <taxon>Eukaryota</taxon>
        <taxon>Metazoa</taxon>
        <taxon>Chordata</taxon>
        <taxon>Craniata</taxon>
        <taxon>Vertebrata</taxon>
        <taxon>Euteleostomi</taxon>
        <taxon>Actinopterygii</taxon>
        <taxon>Neopterygii</taxon>
        <taxon>Teleostei</taxon>
        <taxon>Neoteleostei</taxon>
        <taxon>Acanthomorphata</taxon>
        <taxon>Eupercaria</taxon>
        <taxon>Spariformes</taxon>
        <taxon>Sparidae</taxon>
        <taxon>Sparus</taxon>
    </lineage>
</organism>
<comment type="function">
    <text>Nuclear hormone receptor that can act as a repressor or activator of transcription. High affinity receptor for thyroid hormones, including triiodothyronine and thyroxine.</text>
</comment>
<comment type="subcellular location">
    <subcellularLocation>
        <location>Nucleus</location>
    </subcellularLocation>
</comment>
<comment type="domain">
    <text>Composed of three domains: a modulating N-terminal domain, a DNA-binding domain and a C-terminal ligand-binding domain.</text>
</comment>
<comment type="similarity">
    <text evidence="3">Belongs to the nuclear hormone receptor family. NR1 subfamily.</text>
</comment>
<protein>
    <recommendedName>
        <fullName>Thyroid hormone receptor alpha</fullName>
    </recommendedName>
    <alternativeName>
        <fullName>Nuclear receptor subfamily 1 group A member 1</fullName>
    </alternativeName>
</protein>